<protein>
    <recommendedName>
        <fullName evidence="1">DNA repair protein RecO</fullName>
    </recommendedName>
    <alternativeName>
        <fullName evidence="1">Recombination protein O</fullName>
    </alternativeName>
</protein>
<gene>
    <name evidence="1" type="primary">recO</name>
    <name type="ordered locus">WRi_002090</name>
</gene>
<reference key="1">
    <citation type="journal article" date="2009" name="Proc. Natl. Acad. Sci. U.S.A.">
        <title>The mosaic genome structure of the Wolbachia wRi strain infecting Drosophila simulans.</title>
        <authorList>
            <person name="Klasson L."/>
            <person name="Westberg J."/>
            <person name="Sapountzis P."/>
            <person name="Naeslund K."/>
            <person name="Lutnaes Y."/>
            <person name="Darby A.C."/>
            <person name="Veneti Z."/>
            <person name="Chen L."/>
            <person name="Braig H.R."/>
            <person name="Garrett R."/>
            <person name="Bourtzis K."/>
            <person name="Andersson S.G."/>
        </authorList>
    </citation>
    <scope>NUCLEOTIDE SEQUENCE [LARGE SCALE GENOMIC DNA]</scope>
    <source>
        <strain>wRi</strain>
    </source>
</reference>
<comment type="function">
    <text evidence="1">Involved in DNA repair and RecF pathway recombination.</text>
</comment>
<comment type="similarity">
    <text evidence="1">Belongs to the RecO family.</text>
</comment>
<accession>C0R5J8</accession>
<dbReference type="EMBL" id="CP001391">
    <property type="protein sequence ID" value="ACN95040.1"/>
    <property type="molecule type" value="Genomic_DNA"/>
</dbReference>
<dbReference type="RefSeq" id="WP_006280421.1">
    <property type="nucleotide sequence ID" value="NZ_MKIF01000136.1"/>
</dbReference>
<dbReference type="SMR" id="C0R5J8"/>
<dbReference type="STRING" id="66084.WRi_002090"/>
<dbReference type="KEGG" id="wri:WRi_002090"/>
<dbReference type="HOGENOM" id="CLU_086029_0_0_5"/>
<dbReference type="Proteomes" id="UP000001293">
    <property type="component" value="Chromosome"/>
</dbReference>
<dbReference type="GO" id="GO:0043590">
    <property type="term" value="C:bacterial nucleoid"/>
    <property type="evidence" value="ECO:0007669"/>
    <property type="project" value="TreeGrafter"/>
</dbReference>
<dbReference type="GO" id="GO:0006310">
    <property type="term" value="P:DNA recombination"/>
    <property type="evidence" value="ECO:0007669"/>
    <property type="project" value="UniProtKB-UniRule"/>
</dbReference>
<dbReference type="GO" id="GO:0006302">
    <property type="term" value="P:double-strand break repair"/>
    <property type="evidence" value="ECO:0007669"/>
    <property type="project" value="TreeGrafter"/>
</dbReference>
<dbReference type="Gene3D" id="2.40.50.140">
    <property type="entry name" value="Nucleic acid-binding proteins"/>
    <property type="match status" value="1"/>
</dbReference>
<dbReference type="Gene3D" id="1.20.1440.120">
    <property type="entry name" value="Recombination protein O, C-terminal domain"/>
    <property type="match status" value="1"/>
</dbReference>
<dbReference type="HAMAP" id="MF_00201">
    <property type="entry name" value="RecO"/>
    <property type="match status" value="1"/>
</dbReference>
<dbReference type="InterPro" id="IPR037278">
    <property type="entry name" value="ARFGAP/RecO"/>
</dbReference>
<dbReference type="InterPro" id="IPR022572">
    <property type="entry name" value="DNA_rep/recomb_RecO_N"/>
</dbReference>
<dbReference type="InterPro" id="IPR012340">
    <property type="entry name" value="NA-bd_OB-fold"/>
</dbReference>
<dbReference type="InterPro" id="IPR003717">
    <property type="entry name" value="RecO"/>
</dbReference>
<dbReference type="InterPro" id="IPR042242">
    <property type="entry name" value="RecO_C"/>
</dbReference>
<dbReference type="NCBIfam" id="TIGR00613">
    <property type="entry name" value="reco"/>
    <property type="match status" value="1"/>
</dbReference>
<dbReference type="PANTHER" id="PTHR33991">
    <property type="entry name" value="DNA REPAIR PROTEIN RECO"/>
    <property type="match status" value="1"/>
</dbReference>
<dbReference type="PANTHER" id="PTHR33991:SF1">
    <property type="entry name" value="DNA REPAIR PROTEIN RECO"/>
    <property type="match status" value="1"/>
</dbReference>
<dbReference type="Pfam" id="PF02565">
    <property type="entry name" value="RecO_C"/>
    <property type="match status" value="1"/>
</dbReference>
<dbReference type="Pfam" id="PF11967">
    <property type="entry name" value="RecO_N"/>
    <property type="match status" value="1"/>
</dbReference>
<dbReference type="SUPFAM" id="SSF57863">
    <property type="entry name" value="ArfGap/RecO-like zinc finger"/>
    <property type="match status" value="1"/>
</dbReference>
<evidence type="ECO:0000255" key="1">
    <source>
        <dbReference type="HAMAP-Rule" id="MF_00201"/>
    </source>
</evidence>
<proteinExistence type="inferred from homology"/>
<name>RECO_WOLWR</name>
<keyword id="KW-0227">DNA damage</keyword>
<keyword id="KW-0233">DNA recombination</keyword>
<keyword id="KW-0234">DNA repair</keyword>
<organism>
    <name type="scientific">Wolbachia sp. subsp. Drosophila simulans (strain wRi)</name>
    <dbReference type="NCBI Taxonomy" id="66084"/>
    <lineage>
        <taxon>Bacteria</taxon>
        <taxon>Pseudomonadati</taxon>
        <taxon>Pseudomonadota</taxon>
        <taxon>Alphaproteobacteria</taxon>
        <taxon>Rickettsiales</taxon>
        <taxon>Anaplasmataceae</taxon>
        <taxon>Wolbachieae</taxon>
        <taxon>Wolbachia</taxon>
    </lineage>
</organism>
<feature type="chain" id="PRO_1000193435" description="DNA repair protein RecO">
    <location>
        <begin position="1"/>
        <end position="240"/>
    </location>
</feature>
<sequence length="240" mass="27947">MRWKDEGIIIAAKKYGDKNLILSLFTKNHGKRRGLTKLTNNSNYKFQISNLLHAEWSAKLPENLGFFKCELIESSFHHFFQDRLKSITIVSFSSILEKVLPESEPCAVLYDNFRYFIDVIKHNNQSWQSHYLNLELLLLTQLGFKLDLSKCAVTGVKENLQFISPKTGRAVSKKAGDYYADKLLPFPQMLHDVYNNNLQNSYSFQEFQLGLKVTGYFLNKYLFLQLNVKFPELRNLMLSL</sequence>